<accession>Q5R8D7</accession>
<gene>
    <name type="primary">PSMC2</name>
</gene>
<dbReference type="EMBL" id="CR859816">
    <property type="protein sequence ID" value="CAH91973.1"/>
    <property type="molecule type" value="mRNA"/>
</dbReference>
<dbReference type="RefSeq" id="NP_001126144.1">
    <property type="nucleotide sequence ID" value="NM_001132672.1"/>
</dbReference>
<dbReference type="SMR" id="Q5R8D7"/>
<dbReference type="STRING" id="9601.ENSPPYP00000020045"/>
<dbReference type="GeneID" id="100173102"/>
<dbReference type="KEGG" id="pon:100173102"/>
<dbReference type="CTD" id="5701"/>
<dbReference type="eggNOG" id="KOG0729">
    <property type="taxonomic scope" value="Eukaryota"/>
</dbReference>
<dbReference type="InParanoid" id="Q5R8D7"/>
<dbReference type="OrthoDB" id="1664597at2759"/>
<dbReference type="Proteomes" id="UP000001595">
    <property type="component" value="Unplaced"/>
</dbReference>
<dbReference type="GO" id="GO:0005634">
    <property type="term" value="C:nucleus"/>
    <property type="evidence" value="ECO:0007669"/>
    <property type="project" value="UniProtKB-SubCell"/>
</dbReference>
<dbReference type="GO" id="GO:0000932">
    <property type="term" value="C:P-body"/>
    <property type="evidence" value="ECO:0000250"/>
    <property type="project" value="UniProtKB"/>
</dbReference>
<dbReference type="GO" id="GO:0022624">
    <property type="term" value="C:proteasome accessory complex"/>
    <property type="evidence" value="ECO:0000250"/>
    <property type="project" value="UniProtKB"/>
</dbReference>
<dbReference type="GO" id="GO:0000502">
    <property type="term" value="C:proteasome complex"/>
    <property type="evidence" value="ECO:0000250"/>
    <property type="project" value="UniProtKB"/>
</dbReference>
<dbReference type="GO" id="GO:0005524">
    <property type="term" value="F:ATP binding"/>
    <property type="evidence" value="ECO:0007669"/>
    <property type="project" value="UniProtKB-KW"/>
</dbReference>
<dbReference type="GO" id="GO:0016887">
    <property type="term" value="F:ATP hydrolysis activity"/>
    <property type="evidence" value="ECO:0007669"/>
    <property type="project" value="InterPro"/>
</dbReference>
<dbReference type="GO" id="GO:0036402">
    <property type="term" value="F:proteasome-activating activity"/>
    <property type="evidence" value="ECO:0000250"/>
    <property type="project" value="UniProtKB"/>
</dbReference>
<dbReference type="GO" id="GO:0006511">
    <property type="term" value="P:ubiquitin-dependent protein catabolic process"/>
    <property type="evidence" value="ECO:0000250"/>
    <property type="project" value="UniProtKB"/>
</dbReference>
<dbReference type="CDD" id="cd19502">
    <property type="entry name" value="RecA-like_PAN_like"/>
    <property type="match status" value="1"/>
</dbReference>
<dbReference type="FunFam" id="1.10.8.60:FF:000005">
    <property type="entry name" value="26S protease regulatory subunit 7"/>
    <property type="match status" value="1"/>
</dbReference>
<dbReference type="FunFam" id="2.40.50.140:FF:000075">
    <property type="entry name" value="26S protease regulatory subunit 7"/>
    <property type="match status" value="1"/>
</dbReference>
<dbReference type="FunFam" id="3.40.50.300:FF:000027">
    <property type="entry name" value="26S protease regulatory subunit 7"/>
    <property type="match status" value="1"/>
</dbReference>
<dbReference type="Gene3D" id="1.10.8.60">
    <property type="match status" value="1"/>
</dbReference>
<dbReference type="Gene3D" id="2.40.50.140">
    <property type="entry name" value="Nucleic acid-binding proteins"/>
    <property type="match status" value="1"/>
</dbReference>
<dbReference type="Gene3D" id="3.40.50.300">
    <property type="entry name" value="P-loop containing nucleotide triphosphate hydrolases"/>
    <property type="match status" value="1"/>
</dbReference>
<dbReference type="InterPro" id="IPR050221">
    <property type="entry name" value="26S_Proteasome_ATPase"/>
</dbReference>
<dbReference type="InterPro" id="IPR003593">
    <property type="entry name" value="AAA+_ATPase"/>
</dbReference>
<dbReference type="InterPro" id="IPR041569">
    <property type="entry name" value="AAA_lid_3"/>
</dbReference>
<dbReference type="InterPro" id="IPR003959">
    <property type="entry name" value="ATPase_AAA_core"/>
</dbReference>
<dbReference type="InterPro" id="IPR003960">
    <property type="entry name" value="ATPase_AAA_CS"/>
</dbReference>
<dbReference type="InterPro" id="IPR012340">
    <property type="entry name" value="NA-bd_OB-fold"/>
</dbReference>
<dbReference type="InterPro" id="IPR027417">
    <property type="entry name" value="P-loop_NTPase"/>
</dbReference>
<dbReference type="InterPro" id="IPR048723">
    <property type="entry name" value="PRS7-like_OB"/>
</dbReference>
<dbReference type="PANTHER" id="PTHR23073">
    <property type="entry name" value="26S PROTEASOME REGULATORY SUBUNIT"/>
    <property type="match status" value="1"/>
</dbReference>
<dbReference type="Pfam" id="PF00004">
    <property type="entry name" value="AAA"/>
    <property type="match status" value="1"/>
</dbReference>
<dbReference type="Pfam" id="PF17862">
    <property type="entry name" value="AAA_lid_3"/>
    <property type="match status" value="1"/>
</dbReference>
<dbReference type="Pfam" id="PF21236">
    <property type="entry name" value="PRS7_OB"/>
    <property type="match status" value="1"/>
</dbReference>
<dbReference type="SMART" id="SM00382">
    <property type="entry name" value="AAA"/>
    <property type="match status" value="1"/>
</dbReference>
<dbReference type="SUPFAM" id="SSF52540">
    <property type="entry name" value="P-loop containing nucleoside triphosphate hydrolases"/>
    <property type="match status" value="1"/>
</dbReference>
<dbReference type="PROSITE" id="PS00674">
    <property type="entry name" value="AAA"/>
    <property type="match status" value="1"/>
</dbReference>
<evidence type="ECO:0000250" key="1">
    <source>
        <dbReference type="UniProtKB" id="P35998"/>
    </source>
</evidence>
<evidence type="ECO:0000255" key="2"/>
<evidence type="ECO:0000256" key="3">
    <source>
        <dbReference type="SAM" id="MobiDB-lite"/>
    </source>
</evidence>
<evidence type="ECO:0000305" key="4"/>
<protein>
    <recommendedName>
        <fullName>26S proteasome regulatory subunit 7</fullName>
    </recommendedName>
    <alternativeName>
        <fullName>26S proteasome AAA-ATPase subunit RPT1</fullName>
    </alternativeName>
    <alternativeName>
        <fullName>Proteasome 26S subunit ATPase 2</fullName>
    </alternativeName>
</protein>
<comment type="function">
    <text evidence="1">Component of the 26S proteasome, a multiprotein complex involved in the ATP-dependent degradation of ubiquitinated proteins. This complex plays a key role in the maintenance of protein homeostasis by removing misfolded or damaged proteins, which could impair cellular functions, and by removing proteins whose functions are no longer required. Therefore, the proteasome participates in numerous cellular processes, including cell cycle progression, apoptosis, or DNA damage repair. PSMC2 belongs to the heterohexameric ring of AAA (ATPases associated with diverse cellular activities) proteins that unfolds ubiquitinated target proteins that are concurrently translocated into a proteolytic chamber and degraded into peptides.</text>
</comment>
<comment type="subunit">
    <text evidence="1">Component of the 19S proteasome regulatory particle complex. The 26S proteasome consists of a 20S core particle (CP) and two 19S regulatory subunits (RP). The regulatory particle is made of a lid composed of 9 subunits, a base containing 6 ATPases including PSMC2 and few additional components. Interacts with NDC80/HEC; this interaction is detected only during M phase. Interacts and SQSTM1. Interacts with PAAF1. Directly interacts with TRIM5.</text>
</comment>
<comment type="subcellular location">
    <subcellularLocation>
        <location evidence="1">Cytoplasm</location>
    </subcellularLocation>
    <subcellularLocation>
        <location evidence="1">Nucleus</location>
    </subcellularLocation>
    <text evidence="1">Colocalizes with TRIM5 in cytoplasmic bodies.</text>
</comment>
<comment type="PTM">
    <text evidence="1">Monoubiquitinated by RNF181.</text>
</comment>
<comment type="PTM">
    <text evidence="1">Phosphorylated. Dephosphorylated by UBLCP1 which impairs PSMC2 ATPase activity and disrupts 26S proteasome assembly.</text>
</comment>
<comment type="similarity">
    <text evidence="4">Belongs to the AAA ATPase family.</text>
</comment>
<name>PRS7_PONAB</name>
<keyword id="KW-0007">Acetylation</keyword>
<keyword id="KW-0067">ATP-binding</keyword>
<keyword id="KW-0963">Cytoplasm</keyword>
<keyword id="KW-0547">Nucleotide-binding</keyword>
<keyword id="KW-0539">Nucleus</keyword>
<keyword id="KW-0597">Phosphoprotein</keyword>
<keyword id="KW-0647">Proteasome</keyword>
<keyword id="KW-1185">Reference proteome</keyword>
<keyword id="KW-0832">Ubl conjugation</keyword>
<organism>
    <name type="scientific">Pongo abelii</name>
    <name type="common">Sumatran orangutan</name>
    <name type="synonym">Pongo pygmaeus abelii</name>
    <dbReference type="NCBI Taxonomy" id="9601"/>
    <lineage>
        <taxon>Eukaryota</taxon>
        <taxon>Metazoa</taxon>
        <taxon>Chordata</taxon>
        <taxon>Craniata</taxon>
        <taxon>Vertebrata</taxon>
        <taxon>Euteleostomi</taxon>
        <taxon>Mammalia</taxon>
        <taxon>Eutheria</taxon>
        <taxon>Euarchontoglires</taxon>
        <taxon>Primates</taxon>
        <taxon>Haplorrhini</taxon>
        <taxon>Catarrhini</taxon>
        <taxon>Hominidae</taxon>
        <taxon>Pongo</taxon>
    </lineage>
</organism>
<proteinExistence type="evidence at transcript level"/>
<reference key="1">
    <citation type="submission" date="2004-11" db="EMBL/GenBank/DDBJ databases">
        <authorList>
            <consortium name="The German cDNA consortium"/>
        </authorList>
    </citation>
    <scope>NUCLEOTIDE SEQUENCE [LARGE SCALE MRNA]</scope>
    <source>
        <tissue>Kidney</tissue>
    </source>
</reference>
<sequence>MPDYLGADQRKTKEDEKDDKPIRALDEGDIALLKTYGQSTYSRQIKQVEDDIQQLLKKINELTGIKESDTGLAPPALWDLAADKQTLQSEQPLQVARCTKIITADSEDPKYIINVKQFAKFVVDLSDQVAPTDIEEGMRVGVDRNKYQIHIPLPPKIDPTVTMMQVEEKPDVTYSDVGGCKEQIEKLREVVETPLLHPERFVNLGIEPPKGVLLFGPPGTGKTLCARAVANRTDACFIRVIGSELVQKYVGEGARMVRELFEMARTKKACLIFFDEIDAIGGARFDDGAGGDNEVQRTMLELINQLDGFDPRGNIKVLMATNRPDTLDPALMRPGRLDRKIEFSLPDLEGRTHILKIHARSMSVERDIRFELLARLCPNSTGAEIRSVCTEAGMFAIRARRKIATEKDFLEAVNKVIKSYAKFSATPRYMTYN</sequence>
<feature type="chain" id="PRO_0000249768" description="26S proteasome regulatory subunit 7">
    <location>
        <begin position="1"/>
        <end position="433"/>
    </location>
</feature>
<feature type="region of interest" description="Disordered" evidence="3">
    <location>
        <begin position="1"/>
        <end position="22"/>
    </location>
</feature>
<feature type="compositionally biased region" description="Basic and acidic residues" evidence="3">
    <location>
        <begin position="8"/>
        <end position="22"/>
    </location>
</feature>
<feature type="binding site" evidence="2">
    <location>
        <begin position="216"/>
        <end position="223"/>
    </location>
    <ligand>
        <name>ATP</name>
        <dbReference type="ChEBI" id="CHEBI:30616"/>
    </ligand>
</feature>
<feature type="modified residue" description="N6-acetyllysine" evidence="1">
    <location>
        <position position="116"/>
    </location>
</feature>
<feature type="modified residue" description="N6-acetyllysine" evidence="1">
    <location>
        <position position="422"/>
    </location>
</feature>